<feature type="chain" id="PRO_1000165549" description="Small ribosomal subunit protein uS11">
    <location>
        <begin position="1"/>
        <end position="129"/>
    </location>
</feature>
<dbReference type="EMBL" id="CU928162">
    <property type="protein sequence ID" value="CAR10100.2"/>
    <property type="molecule type" value="Genomic_DNA"/>
</dbReference>
<dbReference type="RefSeq" id="WP_001029684.1">
    <property type="nucleotide sequence ID" value="NC_011745.1"/>
</dbReference>
<dbReference type="SMR" id="B7N182"/>
<dbReference type="GeneID" id="93778690"/>
<dbReference type="KEGG" id="ecq:ECED1_3961"/>
<dbReference type="HOGENOM" id="CLU_072439_5_0_6"/>
<dbReference type="Proteomes" id="UP000000748">
    <property type="component" value="Chromosome"/>
</dbReference>
<dbReference type="GO" id="GO:1990904">
    <property type="term" value="C:ribonucleoprotein complex"/>
    <property type="evidence" value="ECO:0007669"/>
    <property type="project" value="UniProtKB-KW"/>
</dbReference>
<dbReference type="GO" id="GO:0005840">
    <property type="term" value="C:ribosome"/>
    <property type="evidence" value="ECO:0007669"/>
    <property type="project" value="UniProtKB-KW"/>
</dbReference>
<dbReference type="GO" id="GO:0019843">
    <property type="term" value="F:rRNA binding"/>
    <property type="evidence" value="ECO:0007669"/>
    <property type="project" value="UniProtKB-UniRule"/>
</dbReference>
<dbReference type="GO" id="GO:0003735">
    <property type="term" value="F:structural constituent of ribosome"/>
    <property type="evidence" value="ECO:0007669"/>
    <property type="project" value="InterPro"/>
</dbReference>
<dbReference type="GO" id="GO:0006412">
    <property type="term" value="P:translation"/>
    <property type="evidence" value="ECO:0007669"/>
    <property type="project" value="UniProtKB-UniRule"/>
</dbReference>
<dbReference type="FunFam" id="3.30.420.80:FF:000001">
    <property type="entry name" value="30S ribosomal protein S11"/>
    <property type="match status" value="1"/>
</dbReference>
<dbReference type="Gene3D" id="3.30.420.80">
    <property type="entry name" value="Ribosomal protein S11"/>
    <property type="match status" value="1"/>
</dbReference>
<dbReference type="HAMAP" id="MF_01310">
    <property type="entry name" value="Ribosomal_uS11"/>
    <property type="match status" value="1"/>
</dbReference>
<dbReference type="InterPro" id="IPR001971">
    <property type="entry name" value="Ribosomal_uS11"/>
</dbReference>
<dbReference type="InterPro" id="IPR019981">
    <property type="entry name" value="Ribosomal_uS11_bac-type"/>
</dbReference>
<dbReference type="InterPro" id="IPR018102">
    <property type="entry name" value="Ribosomal_uS11_CS"/>
</dbReference>
<dbReference type="InterPro" id="IPR036967">
    <property type="entry name" value="Ribosomal_uS11_sf"/>
</dbReference>
<dbReference type="NCBIfam" id="NF003698">
    <property type="entry name" value="PRK05309.1"/>
    <property type="match status" value="1"/>
</dbReference>
<dbReference type="NCBIfam" id="TIGR03632">
    <property type="entry name" value="uS11_bact"/>
    <property type="match status" value="1"/>
</dbReference>
<dbReference type="PANTHER" id="PTHR11759">
    <property type="entry name" value="40S RIBOSOMAL PROTEIN S14/30S RIBOSOMAL PROTEIN S11"/>
    <property type="match status" value="1"/>
</dbReference>
<dbReference type="Pfam" id="PF00411">
    <property type="entry name" value="Ribosomal_S11"/>
    <property type="match status" value="1"/>
</dbReference>
<dbReference type="PIRSF" id="PIRSF002131">
    <property type="entry name" value="Ribosomal_S11"/>
    <property type="match status" value="1"/>
</dbReference>
<dbReference type="SUPFAM" id="SSF53137">
    <property type="entry name" value="Translational machinery components"/>
    <property type="match status" value="1"/>
</dbReference>
<dbReference type="PROSITE" id="PS00054">
    <property type="entry name" value="RIBOSOMAL_S11"/>
    <property type="match status" value="1"/>
</dbReference>
<name>RS11_ECO81</name>
<protein>
    <recommendedName>
        <fullName evidence="1">Small ribosomal subunit protein uS11</fullName>
    </recommendedName>
    <alternativeName>
        <fullName evidence="2">30S ribosomal protein S11</fullName>
    </alternativeName>
</protein>
<sequence length="129" mass="13845">MAKAPIRARKRVRKQVSDGVAHIHASFNNTIVTITDRQGNALGWATAGGSGFRGSRKSTPFAAQVAAERCADAVKEYGIKNLEVMVKGPGPGRESTIRALNAAGFRITNITDVTPIPHNGCRPPKKRRV</sequence>
<proteinExistence type="inferred from homology"/>
<evidence type="ECO:0000255" key="1">
    <source>
        <dbReference type="HAMAP-Rule" id="MF_01310"/>
    </source>
</evidence>
<evidence type="ECO:0000305" key="2"/>
<keyword id="KW-0687">Ribonucleoprotein</keyword>
<keyword id="KW-0689">Ribosomal protein</keyword>
<keyword id="KW-0694">RNA-binding</keyword>
<keyword id="KW-0699">rRNA-binding</keyword>
<comment type="function">
    <text evidence="1">Located on the platform of the 30S subunit, it bridges several disparate RNA helices of the 16S rRNA. Forms part of the Shine-Dalgarno cleft in the 70S ribosome.</text>
</comment>
<comment type="subunit">
    <text evidence="1">Part of the 30S ribosomal subunit. Interacts with proteins S7 and S18. Binds to IF-3.</text>
</comment>
<comment type="similarity">
    <text evidence="1">Belongs to the universal ribosomal protein uS11 family.</text>
</comment>
<reference key="1">
    <citation type="journal article" date="2009" name="PLoS Genet.">
        <title>Organised genome dynamics in the Escherichia coli species results in highly diverse adaptive paths.</title>
        <authorList>
            <person name="Touchon M."/>
            <person name="Hoede C."/>
            <person name="Tenaillon O."/>
            <person name="Barbe V."/>
            <person name="Baeriswyl S."/>
            <person name="Bidet P."/>
            <person name="Bingen E."/>
            <person name="Bonacorsi S."/>
            <person name="Bouchier C."/>
            <person name="Bouvet O."/>
            <person name="Calteau A."/>
            <person name="Chiapello H."/>
            <person name="Clermont O."/>
            <person name="Cruveiller S."/>
            <person name="Danchin A."/>
            <person name="Diard M."/>
            <person name="Dossat C."/>
            <person name="Karoui M.E."/>
            <person name="Frapy E."/>
            <person name="Garry L."/>
            <person name="Ghigo J.M."/>
            <person name="Gilles A.M."/>
            <person name="Johnson J."/>
            <person name="Le Bouguenec C."/>
            <person name="Lescat M."/>
            <person name="Mangenot S."/>
            <person name="Martinez-Jehanne V."/>
            <person name="Matic I."/>
            <person name="Nassif X."/>
            <person name="Oztas S."/>
            <person name="Petit M.A."/>
            <person name="Pichon C."/>
            <person name="Rouy Z."/>
            <person name="Ruf C.S."/>
            <person name="Schneider D."/>
            <person name="Tourret J."/>
            <person name="Vacherie B."/>
            <person name="Vallenet D."/>
            <person name="Medigue C."/>
            <person name="Rocha E.P.C."/>
            <person name="Denamur E."/>
        </authorList>
    </citation>
    <scope>NUCLEOTIDE SEQUENCE [LARGE SCALE GENOMIC DNA]</scope>
    <source>
        <strain>ED1a</strain>
    </source>
</reference>
<gene>
    <name evidence="1" type="primary">rpsK</name>
    <name type="ordered locus">ECED1_3961</name>
</gene>
<accession>B7N182</accession>
<organism>
    <name type="scientific">Escherichia coli O81 (strain ED1a)</name>
    <dbReference type="NCBI Taxonomy" id="585397"/>
    <lineage>
        <taxon>Bacteria</taxon>
        <taxon>Pseudomonadati</taxon>
        <taxon>Pseudomonadota</taxon>
        <taxon>Gammaproteobacteria</taxon>
        <taxon>Enterobacterales</taxon>
        <taxon>Enterobacteriaceae</taxon>
        <taxon>Escherichia</taxon>
    </lineage>
</organism>